<feature type="chain" id="PRO_0000092529" description="Molybdenum import ATP-binding protein ModC 2">
    <location>
        <begin position="1"/>
        <end position="358"/>
    </location>
</feature>
<feature type="domain" description="ABC transporter" evidence="1">
    <location>
        <begin position="1"/>
        <end position="234"/>
    </location>
</feature>
<feature type="domain" description="Mop" evidence="2">
    <location>
        <begin position="293"/>
        <end position="358"/>
    </location>
</feature>
<feature type="binding site" evidence="1">
    <location>
        <begin position="35"/>
        <end position="42"/>
    </location>
    <ligand>
        <name>ATP</name>
        <dbReference type="ChEBI" id="CHEBI:30616"/>
    </ligand>
</feature>
<comment type="function">
    <text evidence="1">Part of the ABC transporter complex ModABC involved in molybdenum import. Responsible for energy coupling to the transport system.</text>
</comment>
<comment type="catalytic activity">
    <reaction evidence="1">
        <text>molybdate(out) + ATP + H2O = molybdate(in) + ADP + phosphate + H(+)</text>
        <dbReference type="Rhea" id="RHEA:22020"/>
        <dbReference type="ChEBI" id="CHEBI:15377"/>
        <dbReference type="ChEBI" id="CHEBI:15378"/>
        <dbReference type="ChEBI" id="CHEBI:30616"/>
        <dbReference type="ChEBI" id="CHEBI:36264"/>
        <dbReference type="ChEBI" id="CHEBI:43474"/>
        <dbReference type="ChEBI" id="CHEBI:456216"/>
        <dbReference type="EC" id="7.3.2.5"/>
    </reaction>
</comment>
<comment type="subunit">
    <text evidence="1">The complex is composed of two ATP-binding proteins (ModC), two transmembrane proteins (ModB) and a solute-binding protein (ModA).</text>
</comment>
<comment type="subcellular location">
    <subcellularLocation>
        <location evidence="1">Cell inner membrane</location>
        <topology evidence="1">Peripheral membrane protein</topology>
    </subcellularLocation>
</comment>
<comment type="similarity">
    <text evidence="1">Belongs to the ABC transporter superfamily. Molybdate importer (TC 3.A.1.8) family.</text>
</comment>
<organism>
    <name type="scientific">Azotobacter vinelandii</name>
    <dbReference type="NCBI Taxonomy" id="354"/>
    <lineage>
        <taxon>Bacteria</taxon>
        <taxon>Pseudomonadati</taxon>
        <taxon>Pseudomonadota</taxon>
        <taxon>Gammaproteobacteria</taxon>
        <taxon>Pseudomonadales</taxon>
        <taxon>Pseudomonadaceae</taxon>
        <taxon>Azotobacter</taxon>
    </lineage>
</organism>
<sequence>MPEQGIEAQLRLQRGAFRLDAHLQLPANGISVLLGRSGSGKTTLLRAIAGLERAEGFLQVGGQLWQDATCFRPPHQRSLGYVRQASELLPHLDVRANLEFGYRRIPRARRRLGLDEVIALFGLEDLLDQRAEWLPNGPRQRVAIACALLTSPDLLLLDAPLICLDRHSRAQILPALEQLRGQLRIPLLYVTHSQDEVTRLADHLILLDKGKTFASGPPGRLLSDPRLPLNHPDEAAVVLIGQVEHHDPHYRLSTVRVPGGTLSVSLSRLPPGAETRVRIFARDVSLSLDPPHNSSILNILRVRIADLFHEQDSARVMVRLDLDSACILARITRLSADRLGLAPGLQVYAQIKSVALME</sequence>
<protein>
    <recommendedName>
        <fullName evidence="1">Molybdenum import ATP-binding protein ModC 2</fullName>
        <ecNumber evidence="1">7.3.2.5</ecNumber>
    </recommendedName>
</protein>
<accession>Q44538</accession>
<proteinExistence type="inferred from homology"/>
<name>MODC2_AZOVI</name>
<evidence type="ECO:0000255" key="1">
    <source>
        <dbReference type="HAMAP-Rule" id="MF_01705"/>
    </source>
</evidence>
<evidence type="ECO:0000255" key="2">
    <source>
        <dbReference type="PROSITE-ProRule" id="PRU01213"/>
    </source>
</evidence>
<reference key="1">
    <citation type="journal article" date="1989" name="J. Bacteriol.">
        <title>Physical and genetic map of the major nif gene cluster from Azotobacter vinelandii.</title>
        <authorList>
            <person name="Jacobson M.R."/>
            <person name="Brigle K.E."/>
            <person name="Bennett L.T."/>
            <person name="Setterquist R.A."/>
            <person name="Wilson M.S."/>
            <person name="Cash V.L."/>
            <person name="Beynon J."/>
            <person name="Newton W.E."/>
            <person name="Dean D.R."/>
        </authorList>
    </citation>
    <scope>NUCLEOTIDE SEQUENCE [GENOMIC DNA]</scope>
    <source>
        <strain>ATCC 13705 / OP1 / DSM 366 / NCIMB 11614 / LMG 3878 / UW</strain>
    </source>
</reference>
<dbReference type="EC" id="7.3.2.5" evidence="1"/>
<dbReference type="EMBL" id="M20568">
    <property type="protein sequence ID" value="AAA64722.1"/>
    <property type="molecule type" value="Genomic_DNA"/>
</dbReference>
<dbReference type="SMR" id="Q44538"/>
<dbReference type="OMA" id="GKANHEV"/>
<dbReference type="GO" id="GO:0005886">
    <property type="term" value="C:plasma membrane"/>
    <property type="evidence" value="ECO:0007669"/>
    <property type="project" value="UniProtKB-SubCell"/>
</dbReference>
<dbReference type="GO" id="GO:0015412">
    <property type="term" value="F:ABC-type molybdate transporter activity"/>
    <property type="evidence" value="ECO:0007669"/>
    <property type="project" value="UniProtKB-EC"/>
</dbReference>
<dbReference type="GO" id="GO:0005524">
    <property type="term" value="F:ATP binding"/>
    <property type="evidence" value="ECO:0007669"/>
    <property type="project" value="UniProtKB-KW"/>
</dbReference>
<dbReference type="GO" id="GO:0016887">
    <property type="term" value="F:ATP hydrolysis activity"/>
    <property type="evidence" value="ECO:0007669"/>
    <property type="project" value="InterPro"/>
</dbReference>
<dbReference type="Gene3D" id="2.40.50.100">
    <property type="match status" value="1"/>
</dbReference>
<dbReference type="Gene3D" id="3.40.50.300">
    <property type="entry name" value="P-loop containing nucleotide triphosphate hydrolases"/>
    <property type="match status" value="1"/>
</dbReference>
<dbReference type="InterPro" id="IPR003593">
    <property type="entry name" value="AAA+_ATPase"/>
</dbReference>
<dbReference type="InterPro" id="IPR003439">
    <property type="entry name" value="ABC_transporter-like_ATP-bd"/>
</dbReference>
<dbReference type="InterPro" id="IPR008995">
    <property type="entry name" value="Mo/tungstate-bd_C_term_dom"/>
</dbReference>
<dbReference type="InterPro" id="IPR011868">
    <property type="entry name" value="ModC_ABC_ATP-bd"/>
</dbReference>
<dbReference type="InterPro" id="IPR050334">
    <property type="entry name" value="Molybdenum_import_ModC"/>
</dbReference>
<dbReference type="InterPro" id="IPR004606">
    <property type="entry name" value="Mop_domain"/>
</dbReference>
<dbReference type="InterPro" id="IPR027417">
    <property type="entry name" value="P-loop_NTPase"/>
</dbReference>
<dbReference type="InterPro" id="IPR005116">
    <property type="entry name" value="Transp-assoc_OB_typ1"/>
</dbReference>
<dbReference type="NCBIfam" id="TIGR02142">
    <property type="entry name" value="modC_ABC"/>
    <property type="match status" value="1"/>
</dbReference>
<dbReference type="PANTHER" id="PTHR43514">
    <property type="entry name" value="ABC TRANSPORTER I FAMILY MEMBER 10"/>
    <property type="match status" value="1"/>
</dbReference>
<dbReference type="PANTHER" id="PTHR43514:SF10">
    <property type="entry name" value="MOLYBDENUM IMPORT ATP-BINDING PROTEIN MODC 2"/>
    <property type="match status" value="1"/>
</dbReference>
<dbReference type="Pfam" id="PF00005">
    <property type="entry name" value="ABC_tran"/>
    <property type="match status" value="1"/>
</dbReference>
<dbReference type="Pfam" id="PF03459">
    <property type="entry name" value="TOBE"/>
    <property type="match status" value="1"/>
</dbReference>
<dbReference type="SMART" id="SM00382">
    <property type="entry name" value="AAA"/>
    <property type="match status" value="1"/>
</dbReference>
<dbReference type="SUPFAM" id="SSF50331">
    <property type="entry name" value="MOP-like"/>
    <property type="match status" value="1"/>
</dbReference>
<dbReference type="SUPFAM" id="SSF52540">
    <property type="entry name" value="P-loop containing nucleoside triphosphate hydrolases"/>
    <property type="match status" value="1"/>
</dbReference>
<dbReference type="PROSITE" id="PS50893">
    <property type="entry name" value="ABC_TRANSPORTER_2"/>
    <property type="match status" value="1"/>
</dbReference>
<dbReference type="PROSITE" id="PS51241">
    <property type="entry name" value="MODC"/>
    <property type="match status" value="1"/>
</dbReference>
<dbReference type="PROSITE" id="PS51866">
    <property type="entry name" value="MOP"/>
    <property type="match status" value="1"/>
</dbReference>
<keyword id="KW-0067">ATP-binding</keyword>
<keyword id="KW-0997">Cell inner membrane</keyword>
<keyword id="KW-1003">Cell membrane</keyword>
<keyword id="KW-0472">Membrane</keyword>
<keyword id="KW-0500">Molybdenum</keyword>
<keyword id="KW-0547">Nucleotide-binding</keyword>
<keyword id="KW-1278">Translocase</keyword>
<keyword id="KW-0813">Transport</keyword>
<gene>
    <name evidence="1" type="primary">modC2</name>
</gene>